<keyword id="KW-0066">ATP synthesis</keyword>
<keyword id="KW-0997">Cell inner membrane</keyword>
<keyword id="KW-1003">Cell membrane</keyword>
<keyword id="KW-0139">CF(1)</keyword>
<keyword id="KW-0375">Hydrogen ion transport</keyword>
<keyword id="KW-0406">Ion transport</keyword>
<keyword id="KW-0472">Membrane</keyword>
<keyword id="KW-0813">Transport</keyword>
<reference key="1">
    <citation type="journal article" date="2005" name="PLoS Biol.">
        <title>Major structural differences and novel potential virulence mechanisms from the genomes of multiple Campylobacter species.</title>
        <authorList>
            <person name="Fouts D.E."/>
            <person name="Mongodin E.F."/>
            <person name="Mandrell R.E."/>
            <person name="Miller W.G."/>
            <person name="Rasko D.A."/>
            <person name="Ravel J."/>
            <person name="Brinkac L.M."/>
            <person name="DeBoy R.T."/>
            <person name="Parker C.T."/>
            <person name="Daugherty S.C."/>
            <person name="Dodson R.J."/>
            <person name="Durkin A.S."/>
            <person name="Madupu R."/>
            <person name="Sullivan S.A."/>
            <person name="Shetty J.U."/>
            <person name="Ayodeji M.A."/>
            <person name="Shvartsbeyn A."/>
            <person name="Schatz M.C."/>
            <person name="Badger J.H."/>
            <person name="Fraser C.M."/>
            <person name="Nelson K.E."/>
        </authorList>
    </citation>
    <scope>NUCLEOTIDE SEQUENCE [LARGE SCALE GENOMIC DNA]</scope>
    <source>
        <strain>RM1221</strain>
    </source>
</reference>
<dbReference type="EMBL" id="CP000025">
    <property type="protein sequence ID" value="AAW34694.1"/>
    <property type="molecule type" value="Genomic_DNA"/>
</dbReference>
<dbReference type="PIR" id="H81426">
    <property type="entry name" value="H81426"/>
</dbReference>
<dbReference type="RefSeq" id="WP_002851861.1">
    <property type="nucleotide sequence ID" value="NC_003912.7"/>
</dbReference>
<dbReference type="SMR" id="Q5HX62"/>
<dbReference type="KEGG" id="cjr:CJE0099"/>
<dbReference type="HOGENOM" id="CLU_085114_3_1_7"/>
<dbReference type="GO" id="GO:0005886">
    <property type="term" value="C:plasma membrane"/>
    <property type="evidence" value="ECO:0007669"/>
    <property type="project" value="UniProtKB-SubCell"/>
</dbReference>
<dbReference type="GO" id="GO:0045259">
    <property type="term" value="C:proton-transporting ATP synthase complex"/>
    <property type="evidence" value="ECO:0007669"/>
    <property type="project" value="UniProtKB-KW"/>
</dbReference>
<dbReference type="GO" id="GO:0046933">
    <property type="term" value="F:proton-transporting ATP synthase activity, rotational mechanism"/>
    <property type="evidence" value="ECO:0007669"/>
    <property type="project" value="UniProtKB-UniRule"/>
</dbReference>
<dbReference type="Gene3D" id="1.10.520.20">
    <property type="entry name" value="N-terminal domain of the delta subunit of the F1F0-ATP synthase"/>
    <property type="match status" value="1"/>
</dbReference>
<dbReference type="HAMAP" id="MF_01416">
    <property type="entry name" value="ATP_synth_delta_bact"/>
    <property type="match status" value="1"/>
</dbReference>
<dbReference type="InterPro" id="IPR026015">
    <property type="entry name" value="ATP_synth_OSCP/delta_N_sf"/>
</dbReference>
<dbReference type="InterPro" id="IPR000711">
    <property type="entry name" value="ATPase_OSCP/dsu"/>
</dbReference>
<dbReference type="NCBIfam" id="TIGR01145">
    <property type="entry name" value="ATP_synt_delta"/>
    <property type="match status" value="1"/>
</dbReference>
<dbReference type="NCBIfam" id="NF006291">
    <property type="entry name" value="PRK08474.1"/>
    <property type="match status" value="1"/>
</dbReference>
<dbReference type="PANTHER" id="PTHR11910">
    <property type="entry name" value="ATP SYNTHASE DELTA CHAIN"/>
    <property type="match status" value="1"/>
</dbReference>
<dbReference type="Pfam" id="PF00213">
    <property type="entry name" value="OSCP"/>
    <property type="match status" value="1"/>
</dbReference>
<dbReference type="PRINTS" id="PR00125">
    <property type="entry name" value="ATPASEDELTA"/>
</dbReference>
<dbReference type="SUPFAM" id="SSF47928">
    <property type="entry name" value="N-terminal domain of the delta subunit of the F1F0-ATP synthase"/>
    <property type="match status" value="1"/>
</dbReference>
<sequence length="173" mass="20396">MENIIARRYAKAIASRADINDFYQNLCILNSAFVLPKFKNIIESNEIKKERKMEFLDSFFDIKNSSFQNFLRLLIENSRLECIPQIVKELERQKAFKENIFVGIVYSKEKLSQENLKDLEVKLNKKFDANIKLNNKISQDDSVKIELEELGYELSFSMKALQNKLNEYILKII</sequence>
<protein>
    <recommendedName>
        <fullName evidence="1">ATP synthase subunit delta</fullName>
    </recommendedName>
    <alternativeName>
        <fullName evidence="1">ATP synthase F(1) sector subunit delta</fullName>
    </alternativeName>
    <alternativeName>
        <fullName evidence="1">F-type ATPase subunit delta</fullName>
        <shortName evidence="1">F-ATPase subunit delta</shortName>
    </alternativeName>
</protein>
<organism>
    <name type="scientific">Campylobacter jejuni (strain RM1221)</name>
    <dbReference type="NCBI Taxonomy" id="195099"/>
    <lineage>
        <taxon>Bacteria</taxon>
        <taxon>Pseudomonadati</taxon>
        <taxon>Campylobacterota</taxon>
        <taxon>Epsilonproteobacteria</taxon>
        <taxon>Campylobacterales</taxon>
        <taxon>Campylobacteraceae</taxon>
        <taxon>Campylobacter</taxon>
    </lineage>
</organism>
<gene>
    <name evidence="1" type="primary">atpH</name>
    <name type="ordered locus">CJE0099</name>
</gene>
<accession>Q5HX62</accession>
<comment type="function">
    <text evidence="1">F(1)F(0) ATP synthase produces ATP from ADP in the presence of a proton or sodium gradient. F-type ATPases consist of two structural domains, F(1) containing the extramembraneous catalytic core and F(0) containing the membrane proton channel, linked together by a central stalk and a peripheral stalk. During catalysis, ATP synthesis in the catalytic domain of F(1) is coupled via a rotary mechanism of the central stalk subunits to proton translocation.</text>
</comment>
<comment type="function">
    <text evidence="1">This protein is part of the stalk that links CF(0) to CF(1). It either transmits conformational changes from CF(0) to CF(1) or is implicated in proton conduction.</text>
</comment>
<comment type="subunit">
    <text evidence="1">F-type ATPases have 2 components, F(1) - the catalytic core - and F(0) - the membrane proton channel. F(1) has five subunits: alpha(3), beta(3), gamma(1), delta(1), epsilon(1). F(0) has three main subunits: a(1), b(2) and c(10-14). The alpha and beta chains form an alternating ring which encloses part of the gamma chain. F(1) is attached to F(0) by a central stalk formed by the gamma and epsilon chains, while a peripheral stalk is formed by the delta and b chains.</text>
</comment>
<comment type="subcellular location">
    <subcellularLocation>
        <location evidence="1">Cell inner membrane</location>
        <topology evidence="1">Peripheral membrane protein</topology>
    </subcellularLocation>
</comment>
<comment type="similarity">
    <text evidence="1">Belongs to the ATPase delta chain family.</text>
</comment>
<evidence type="ECO:0000255" key="1">
    <source>
        <dbReference type="HAMAP-Rule" id="MF_01416"/>
    </source>
</evidence>
<feature type="chain" id="PRO_0000382074" description="ATP synthase subunit delta">
    <location>
        <begin position="1"/>
        <end position="173"/>
    </location>
</feature>
<name>ATPD_CAMJR</name>
<proteinExistence type="inferred from homology"/>